<comment type="function">
    <text evidence="5 6 7">Part of a major quorum-sensing system that regulates the development of genetic competence (PubMed:11751817, PubMed:1715859). Involved in the maturation of the competence pheromone ComX (PubMed:11751817, PubMed:31670609). Acts by catalyzing the transfer of a farnesyl group on the ComX pheromone (PubMed:31670609). Shows weak geranylation activity with geranyl diphosphate (GPP) (PubMed:31670609).</text>
</comment>
<comment type="catalytic activity">
    <reaction evidence="7">
        <text>L-tryptophyl-[protein] + (2E,6E)-farnesyl diphosphate = (2S,3R)-3-farnesyl-2,3-dihydro-2,N(alpha)-cyclo-L-tryptophyl-[protein] + diphosphate</text>
        <dbReference type="Rhea" id="RHEA:68384"/>
        <dbReference type="Rhea" id="RHEA-COMP:15365"/>
        <dbReference type="Rhea" id="RHEA-COMP:17488"/>
        <dbReference type="ChEBI" id="CHEBI:29954"/>
        <dbReference type="ChEBI" id="CHEBI:33019"/>
        <dbReference type="ChEBI" id="CHEBI:175763"/>
        <dbReference type="ChEBI" id="CHEBI:177368"/>
    </reaction>
    <physiologicalReaction direction="left-to-right" evidence="7">
        <dbReference type="Rhea" id="RHEA:68385"/>
    </physiologicalReaction>
</comment>
<comment type="cofactor">
    <cofactor evidence="1">
        <name>Mg(2+)</name>
        <dbReference type="ChEBI" id="CHEBI:18420"/>
    </cofactor>
    <text evidence="3">Binds 2 Mg(2+) ions per subunit.</text>
</comment>
<comment type="subcellular location">
    <subcellularLocation>
        <location evidence="2">Cell membrane</location>
    </subcellularLocation>
</comment>
<comment type="induction">
    <text evidence="6">Expression is maximal early in growth and declines as the cells approach the stationary phase.</text>
</comment>
<comment type="disruption phenotype">
    <text evidence="6">Disruption of the gene prevents the development of competence as well as the transcription of comG, a late competence operon (PubMed:1715859). Disruption also decreases the expression of srfA, a regulatory operon needed for the expression of competence (PubMed:1715859).</text>
</comment>
<comment type="miscellaneous">
    <text evidence="4">The DNA sequences encoding comQ, comX and the N-terminal two-thirds of comP show a striking polymorphism, which determines the specificity of the quorum-sensing system in the different pherotypes of Bacillus.</text>
</comment>
<comment type="similarity">
    <text evidence="9">Belongs to the FPP/GGPP synthase family.</text>
</comment>
<reference key="1">
    <citation type="journal article" date="1991" name="J. Bacteriol.">
        <title>Sequence and properties of comQ, a new competence regulatory gene of Bacillus subtilis.</title>
        <authorList>
            <person name="Weinrauch Y."/>
            <person name="Msadek T."/>
            <person name="Kunst F."/>
            <person name="Dubnau D."/>
        </authorList>
    </citation>
    <scope>NUCLEOTIDE SEQUENCE [GENOMIC DNA]</scope>
    <scope>FUNCTION</scope>
    <scope>INDUCTION</scope>
    <scope>DISRUPTION PHENOTYPE</scope>
    <source>
        <strain>168</strain>
    </source>
</reference>
<reference key="2">
    <citation type="journal article" date="1997" name="Microbiology">
        <title>Analysis of the Bacillus subtilis genome: cloning and nucleotide sequence of a 62 kb region between 275 degrees (rrnB) and 284 degrees (pai).</title>
        <authorList>
            <person name="Oudega B."/>
            <person name="Koningstein G."/>
            <person name="Rodrigues L."/>
            <person name="de Sales Ramon M."/>
            <person name="Hilbert H."/>
            <person name="Duesterhoeft A."/>
            <person name="Pohl T.M."/>
            <person name="Weitzenegger T."/>
        </authorList>
    </citation>
    <scope>NUCLEOTIDE SEQUENCE [GENOMIC DNA]</scope>
    <source>
        <strain>168</strain>
    </source>
</reference>
<reference key="3">
    <citation type="journal article" date="1997" name="Nature">
        <title>The complete genome sequence of the Gram-positive bacterium Bacillus subtilis.</title>
        <authorList>
            <person name="Kunst F."/>
            <person name="Ogasawara N."/>
            <person name="Moszer I."/>
            <person name="Albertini A.M."/>
            <person name="Alloni G."/>
            <person name="Azevedo V."/>
            <person name="Bertero M.G."/>
            <person name="Bessieres P."/>
            <person name="Bolotin A."/>
            <person name="Borchert S."/>
            <person name="Borriss R."/>
            <person name="Boursier L."/>
            <person name="Brans A."/>
            <person name="Braun M."/>
            <person name="Brignell S.C."/>
            <person name="Bron S."/>
            <person name="Brouillet S."/>
            <person name="Bruschi C.V."/>
            <person name="Caldwell B."/>
            <person name="Capuano V."/>
            <person name="Carter N.M."/>
            <person name="Choi S.-K."/>
            <person name="Codani J.-J."/>
            <person name="Connerton I.F."/>
            <person name="Cummings N.J."/>
            <person name="Daniel R.A."/>
            <person name="Denizot F."/>
            <person name="Devine K.M."/>
            <person name="Duesterhoeft A."/>
            <person name="Ehrlich S.D."/>
            <person name="Emmerson P.T."/>
            <person name="Entian K.-D."/>
            <person name="Errington J."/>
            <person name="Fabret C."/>
            <person name="Ferrari E."/>
            <person name="Foulger D."/>
            <person name="Fritz C."/>
            <person name="Fujita M."/>
            <person name="Fujita Y."/>
            <person name="Fuma S."/>
            <person name="Galizzi A."/>
            <person name="Galleron N."/>
            <person name="Ghim S.-Y."/>
            <person name="Glaser P."/>
            <person name="Goffeau A."/>
            <person name="Golightly E.J."/>
            <person name="Grandi G."/>
            <person name="Guiseppi G."/>
            <person name="Guy B.J."/>
            <person name="Haga K."/>
            <person name="Haiech J."/>
            <person name="Harwood C.R."/>
            <person name="Henaut A."/>
            <person name="Hilbert H."/>
            <person name="Holsappel S."/>
            <person name="Hosono S."/>
            <person name="Hullo M.-F."/>
            <person name="Itaya M."/>
            <person name="Jones L.-M."/>
            <person name="Joris B."/>
            <person name="Karamata D."/>
            <person name="Kasahara Y."/>
            <person name="Klaerr-Blanchard M."/>
            <person name="Klein C."/>
            <person name="Kobayashi Y."/>
            <person name="Koetter P."/>
            <person name="Koningstein G."/>
            <person name="Krogh S."/>
            <person name="Kumano M."/>
            <person name="Kurita K."/>
            <person name="Lapidus A."/>
            <person name="Lardinois S."/>
            <person name="Lauber J."/>
            <person name="Lazarevic V."/>
            <person name="Lee S.-M."/>
            <person name="Levine A."/>
            <person name="Liu H."/>
            <person name="Masuda S."/>
            <person name="Mauel C."/>
            <person name="Medigue C."/>
            <person name="Medina N."/>
            <person name="Mellado R.P."/>
            <person name="Mizuno M."/>
            <person name="Moestl D."/>
            <person name="Nakai S."/>
            <person name="Noback M."/>
            <person name="Noone D."/>
            <person name="O'Reilly M."/>
            <person name="Ogawa K."/>
            <person name="Ogiwara A."/>
            <person name="Oudega B."/>
            <person name="Park S.-H."/>
            <person name="Parro V."/>
            <person name="Pohl T.M."/>
            <person name="Portetelle D."/>
            <person name="Porwollik S."/>
            <person name="Prescott A.M."/>
            <person name="Presecan E."/>
            <person name="Pujic P."/>
            <person name="Purnelle B."/>
            <person name="Rapoport G."/>
            <person name="Rey M."/>
            <person name="Reynolds S."/>
            <person name="Rieger M."/>
            <person name="Rivolta C."/>
            <person name="Rocha E."/>
            <person name="Roche B."/>
            <person name="Rose M."/>
            <person name="Sadaie Y."/>
            <person name="Sato T."/>
            <person name="Scanlan E."/>
            <person name="Schleich S."/>
            <person name="Schroeter R."/>
            <person name="Scoffone F."/>
            <person name="Sekiguchi J."/>
            <person name="Sekowska A."/>
            <person name="Seror S.J."/>
            <person name="Serror P."/>
            <person name="Shin B.-S."/>
            <person name="Soldo B."/>
            <person name="Sorokin A."/>
            <person name="Tacconi E."/>
            <person name="Takagi T."/>
            <person name="Takahashi H."/>
            <person name="Takemaru K."/>
            <person name="Takeuchi M."/>
            <person name="Tamakoshi A."/>
            <person name="Tanaka T."/>
            <person name="Terpstra P."/>
            <person name="Tognoni A."/>
            <person name="Tosato V."/>
            <person name="Uchiyama S."/>
            <person name="Vandenbol M."/>
            <person name="Vannier F."/>
            <person name="Vassarotti A."/>
            <person name="Viari A."/>
            <person name="Wambutt R."/>
            <person name="Wedler E."/>
            <person name="Wedler H."/>
            <person name="Weitzenegger T."/>
            <person name="Winters P."/>
            <person name="Wipat A."/>
            <person name="Yamamoto H."/>
            <person name="Yamane K."/>
            <person name="Yasumoto K."/>
            <person name="Yata K."/>
            <person name="Yoshida K."/>
            <person name="Yoshikawa H.-F."/>
            <person name="Zumstein E."/>
            <person name="Yoshikawa H."/>
            <person name="Danchin A."/>
        </authorList>
    </citation>
    <scope>NUCLEOTIDE SEQUENCE [LARGE SCALE GENOMIC DNA]</scope>
    <source>
        <strain>168</strain>
    </source>
</reference>
<reference key="4">
    <citation type="journal article" date="2009" name="Microbiology">
        <title>From a consortium sequence to a unified sequence: the Bacillus subtilis 168 reference genome a decade later.</title>
        <authorList>
            <person name="Barbe V."/>
            <person name="Cruveiller S."/>
            <person name="Kunst F."/>
            <person name="Lenoble P."/>
            <person name="Meurice G."/>
            <person name="Sekowska A."/>
            <person name="Vallenet D."/>
            <person name="Wang T."/>
            <person name="Moszer I."/>
            <person name="Medigue C."/>
            <person name="Danchin A."/>
        </authorList>
    </citation>
    <scope>SEQUENCE REVISION TO 34</scope>
</reference>
<reference key="5">
    <citation type="journal article" date="2001" name="J. Bacteriol.">
        <title>Specificity and genetic polymorphism of the Bacillus competence quorum-sensing system.</title>
        <authorList>
            <person name="Tortosa P."/>
            <person name="Logsdon L."/>
            <person name="Kraigher B."/>
            <person name="Itoh Y."/>
            <person name="Mandic-Mulec I."/>
            <person name="Dubnau D."/>
        </authorList>
    </citation>
    <scope>POLYMORPHISM IN COMX; COMQ AND COMP</scope>
</reference>
<reference key="6">
    <citation type="journal article" date="2002" name="J. Bacteriol.">
        <title>Characterization of comQ and comX, two genes required for production of ComX pheromone in Bacillus subtilis.</title>
        <authorList>
            <person name="Bacon Schneider K."/>
            <person name="Palmer T.M."/>
            <person name="Grossman A.D."/>
        </authorList>
    </citation>
    <scope>FUNCTION</scope>
    <scope>MUTAGENESIS OF ASP-67 AND ASP-71</scope>
    <source>
        <strain>168 / JH642</strain>
    </source>
</reference>
<reference key="7">
    <citation type="journal article" date="2020" name="Biosci. Biotechnol. Biochem.">
        <title>Identification of critical residues for the catalytic activity of ComQ, a Bacillus prenylation enzyme for quorum sensing, by using a simple bioassay system.</title>
        <authorList>
            <person name="Hirooka K."/>
            <person name="Shioda S."/>
            <person name="Okada M."/>
        </authorList>
    </citation>
    <scope>FUNCTION</scope>
    <scope>CATALYTIC ACTIVITY</scope>
    <scope>MUTAGENESIS OF SER-63</scope>
    <source>
        <strain>168</strain>
    </source>
</reference>
<accession>P33690</accession>
<keyword id="KW-1003">Cell membrane</keyword>
<keyword id="KW-0178">Competence</keyword>
<keyword id="KW-0460">Magnesium</keyword>
<keyword id="KW-0472">Membrane</keyword>
<keyword id="KW-0479">Metal-binding</keyword>
<keyword id="KW-0637">Prenyltransferase</keyword>
<keyword id="KW-1185">Reference proteome</keyword>
<keyword id="KW-0808">Transferase</keyword>
<evidence type="ECO:0000250" key="1">
    <source>
        <dbReference type="UniProtKB" id="D4G0R4"/>
    </source>
</evidence>
<evidence type="ECO:0000250" key="2">
    <source>
        <dbReference type="UniProtKB" id="P0DV09"/>
    </source>
</evidence>
<evidence type="ECO:0000250" key="3">
    <source>
        <dbReference type="UniProtKB" id="P14324"/>
    </source>
</evidence>
<evidence type="ECO:0000269" key="4">
    <source>
    </source>
</evidence>
<evidence type="ECO:0000269" key="5">
    <source>
    </source>
</evidence>
<evidence type="ECO:0000269" key="6">
    <source>
    </source>
</evidence>
<evidence type="ECO:0000269" key="7">
    <source>
    </source>
</evidence>
<evidence type="ECO:0000303" key="8">
    <source>
    </source>
</evidence>
<evidence type="ECO:0000305" key="9"/>
<sequence>MKEIVEQNIFNEDLSQLLYSFIDSKETFSFAESTILHYVVFGGENLDVATRLGAGIEILILSSDIMDDLEDEDNHHALWMKINRSESLNAALSLYTVGLTSIYSLNNNPLIFKYVLKYVNEAMQGQHDDITNKSKTEDESLEVIRLKCGSLIALANVAGVLLATGEYNETVERYSYYKGIIAQISGDYYVLLSGNRSDIEKNKHTLIYLYLKRLFNDASEDLLYLISHKDLYYKSLLDKEKFQEKLIKAGVTQYISVLLEIYKQKCISAIEQLNLDKEKKELIKECLLSYTKGDTRCKT</sequence>
<proteinExistence type="evidence at protein level"/>
<feature type="chain" id="PRO_0000090014" description="Tryptophan prenyltransferase ComQ">
    <location>
        <begin position="1"/>
        <end position="299"/>
    </location>
</feature>
<feature type="binding site" evidence="3">
    <location>
        <position position="67"/>
    </location>
    <ligand>
        <name>Mg(2+)</name>
        <dbReference type="ChEBI" id="CHEBI:18420"/>
        <label>1</label>
    </ligand>
</feature>
<feature type="binding site" evidence="3">
    <location>
        <position position="67"/>
    </location>
    <ligand>
        <name>Mg(2+)</name>
        <dbReference type="ChEBI" id="CHEBI:18420"/>
        <label>2</label>
    </ligand>
</feature>
<feature type="binding site" evidence="3">
    <location>
        <position position="71"/>
    </location>
    <ligand>
        <name>Mg(2+)</name>
        <dbReference type="ChEBI" id="CHEBI:18420"/>
        <label>1</label>
    </ligand>
</feature>
<feature type="binding site" evidence="3">
    <location>
        <position position="71"/>
    </location>
    <ligand>
        <name>Mg(2+)</name>
        <dbReference type="ChEBI" id="CHEBI:18420"/>
        <label>2</label>
    </ligand>
</feature>
<feature type="mutagenesis site" description="Reduces the farnesylation activity using FPP as the prenyl donor, but geranylation activity using GPP is comparable to that of the wild-type enzyme." evidence="7">
    <original>S</original>
    <variation>F</variation>
    <location>
        <position position="63"/>
    </location>
</feature>
<feature type="mutagenesis site" description="Loss of activity. Cannot complement the null mutant." evidence="5">
    <original>D</original>
    <variation>E</variation>
    <location>
        <position position="67"/>
    </location>
</feature>
<feature type="mutagenesis site" description="Loss of activity. Cannot complement the null mutant." evidence="5">
    <original>D</original>
    <variation>E</variation>
    <location>
        <position position="71"/>
    </location>
</feature>
<feature type="sequence conflict" description="In Ref. 1; AAA22323 and 2; CAB07902." evidence="9" ref="1 2">
    <original>T</original>
    <variation>S</variation>
    <location>
        <position position="34"/>
    </location>
</feature>
<protein>
    <recommendedName>
        <fullName evidence="9">Tryptophan prenyltransferase ComQ</fullName>
        <ecNumber evidence="7">2.5.1.-</ecNumber>
    </recommendedName>
    <alternativeName>
        <fullName evidence="9">Competence regulatory protein ComQ</fullName>
    </alternativeName>
</protein>
<gene>
    <name evidence="8" type="primary">comQ</name>
    <name type="ordered locus">BSU31710</name>
</gene>
<dbReference type="EC" id="2.5.1.-" evidence="7"/>
<dbReference type="EMBL" id="M71283">
    <property type="protein sequence ID" value="AAA22323.1"/>
    <property type="molecule type" value="Genomic_DNA"/>
</dbReference>
<dbReference type="EMBL" id="Z93932">
    <property type="protein sequence ID" value="CAB07902.1"/>
    <property type="molecule type" value="Genomic_DNA"/>
</dbReference>
<dbReference type="EMBL" id="AL009126">
    <property type="protein sequence ID" value="CAB15159.2"/>
    <property type="molecule type" value="Genomic_DNA"/>
</dbReference>
<dbReference type="PIR" id="A38111">
    <property type="entry name" value="A38111"/>
</dbReference>
<dbReference type="RefSeq" id="NP_391049.2">
    <property type="nucleotide sequence ID" value="NC_000964.3"/>
</dbReference>
<dbReference type="RefSeq" id="WP_003243039.1">
    <property type="nucleotide sequence ID" value="NZ_OZ025638.1"/>
</dbReference>
<dbReference type="SMR" id="P33690"/>
<dbReference type="FunCoup" id="P33690">
    <property type="interactions" value="74"/>
</dbReference>
<dbReference type="STRING" id="224308.BSU31710"/>
<dbReference type="SwissLipids" id="SLP:000001948"/>
<dbReference type="PaxDb" id="224308-BSU31710"/>
<dbReference type="EnsemblBacteria" id="CAB15159">
    <property type="protein sequence ID" value="CAB15159"/>
    <property type="gene ID" value="BSU_31710"/>
</dbReference>
<dbReference type="GeneID" id="937180"/>
<dbReference type="KEGG" id="bsu:BSU31710"/>
<dbReference type="PATRIC" id="fig|224308.179.peg.3436"/>
<dbReference type="eggNOG" id="COG0142">
    <property type="taxonomic scope" value="Bacteria"/>
</dbReference>
<dbReference type="InParanoid" id="P33690"/>
<dbReference type="OrthoDB" id="1792811at2"/>
<dbReference type="BioCyc" id="BSUB:BSU31710-MONOMER"/>
<dbReference type="Proteomes" id="UP000001570">
    <property type="component" value="Chromosome"/>
</dbReference>
<dbReference type="GO" id="GO:0005886">
    <property type="term" value="C:plasma membrane"/>
    <property type="evidence" value="ECO:0007669"/>
    <property type="project" value="UniProtKB-SubCell"/>
</dbReference>
<dbReference type="GO" id="GO:0046872">
    <property type="term" value="F:metal ion binding"/>
    <property type="evidence" value="ECO:0007669"/>
    <property type="project" value="UniProtKB-KW"/>
</dbReference>
<dbReference type="GO" id="GO:0004659">
    <property type="term" value="F:prenyltransferase activity"/>
    <property type="evidence" value="ECO:0000318"/>
    <property type="project" value="GO_Central"/>
</dbReference>
<dbReference type="GO" id="GO:0030420">
    <property type="term" value="P:establishment of competence for transformation"/>
    <property type="evidence" value="ECO:0007669"/>
    <property type="project" value="UniProtKB-KW"/>
</dbReference>
<dbReference type="GO" id="GO:0008299">
    <property type="term" value="P:isoprenoid biosynthetic process"/>
    <property type="evidence" value="ECO:0000318"/>
    <property type="project" value="GO_Central"/>
</dbReference>
<dbReference type="CDD" id="cd00385">
    <property type="entry name" value="Isoprenoid_Biosyn_C1"/>
    <property type="match status" value="1"/>
</dbReference>
<dbReference type="Gene3D" id="1.10.600.10">
    <property type="entry name" value="Farnesyl Diphosphate Synthase"/>
    <property type="match status" value="1"/>
</dbReference>
<dbReference type="InterPro" id="IPR033965">
    <property type="entry name" value="ComQ"/>
</dbReference>
<dbReference type="InterPro" id="IPR008949">
    <property type="entry name" value="Isoprenoid_synthase_dom_sf"/>
</dbReference>
<dbReference type="InterPro" id="IPR000092">
    <property type="entry name" value="Polyprenyl_synt"/>
</dbReference>
<dbReference type="PANTHER" id="PTHR12001:SF69">
    <property type="entry name" value="ALL TRANS-POLYPRENYL-DIPHOSPHATE SYNTHASE PDSS1"/>
    <property type="match status" value="1"/>
</dbReference>
<dbReference type="PANTHER" id="PTHR12001">
    <property type="entry name" value="GERANYLGERANYL PYROPHOSPHATE SYNTHASE"/>
    <property type="match status" value="1"/>
</dbReference>
<dbReference type="Pfam" id="PF00348">
    <property type="entry name" value="polyprenyl_synt"/>
    <property type="match status" value="1"/>
</dbReference>
<dbReference type="SFLD" id="SFLDG01211">
    <property type="entry name" value="Competence_Regulatory_Protein"/>
    <property type="match status" value="1"/>
</dbReference>
<dbReference type="SFLD" id="SFLDS00005">
    <property type="entry name" value="Isoprenoid_Synthase_Type_I"/>
    <property type="match status" value="1"/>
</dbReference>
<dbReference type="SUPFAM" id="SSF48576">
    <property type="entry name" value="Terpenoid synthases"/>
    <property type="match status" value="1"/>
</dbReference>
<organism>
    <name type="scientific">Bacillus subtilis (strain 168)</name>
    <dbReference type="NCBI Taxonomy" id="224308"/>
    <lineage>
        <taxon>Bacteria</taxon>
        <taxon>Bacillati</taxon>
        <taxon>Bacillota</taxon>
        <taxon>Bacilli</taxon>
        <taxon>Bacillales</taxon>
        <taxon>Bacillaceae</taxon>
        <taxon>Bacillus</taxon>
    </lineage>
</organism>
<name>COMQ_BACSU</name>